<feature type="chain" id="PRO_0000423890" description="Rop guanine nucleotide exchange factor 4">
    <location>
        <begin position="1"/>
        <end position="463"/>
    </location>
</feature>
<feature type="domain" description="PRONE" evidence="2">
    <location>
        <begin position="84"/>
        <end position="463"/>
    </location>
</feature>
<feature type="region of interest" description="Disordered" evidence="3">
    <location>
        <begin position="1"/>
        <end position="25"/>
    </location>
</feature>
<feature type="region of interest" description="Disordered" evidence="3">
    <location>
        <begin position="55"/>
        <end position="87"/>
    </location>
</feature>
<feature type="compositionally biased region" description="Acidic residues" evidence="3">
    <location>
        <begin position="59"/>
        <end position="68"/>
    </location>
</feature>
<feature type="compositionally biased region" description="Basic and acidic residues" evidence="3">
    <location>
        <begin position="69"/>
        <end position="78"/>
    </location>
</feature>
<protein>
    <recommendedName>
        <fullName>Rop guanine nucleotide exchange factor 4</fullName>
        <shortName>AtRopGEF4</shortName>
    </recommendedName>
    <alternativeName>
        <fullName>Rho of plants guanine nucleotide exchange factor 4</fullName>
    </alternativeName>
</protein>
<keyword id="KW-1003">Cell membrane</keyword>
<keyword id="KW-0963">Cytoplasm</keyword>
<keyword id="KW-0344">Guanine-nucleotide releasing factor</keyword>
<keyword id="KW-0472">Membrane</keyword>
<keyword id="KW-1185">Reference proteome</keyword>
<keyword id="KW-0346">Stress response</keyword>
<accession>Q0WNP7</accession>
<accession>O80830</accession>
<sequence>MESSSNSDQNEGTPTSSVSSPYRRTYSDISGLSHRFDVQSFYNRPSNTNAVVLSGHEEDVSEDAEEPKDDVVNDVHGDGDEEDSDIDSAEDAELEMMRERFAKLLLGEDMSGSGKGVCTAVTVSNSITNLYATVFGQSLRLQPLSTEKKDLWKREMNCFMSICDYIVEVIPRSLGTNVEITETKLRSDILMSLPALRKLDNMLMEILDSFTENEFWYVERGSSSMNSGGGGRDSGTFRKVVVQRKDEKWWLPVPCVPAEGLSEEERKHLRHKRDCASQIHKAALAINDSTLNDMDIPDSYLTTLPKSGKASVGDVIYKQLCTAEKFYPDQLLDILKITSEHEALELADKVEASLVTWRRKTGGLTHSKSSWDMMKDISGDADRGNDKNHILAARARSLLFCLKQRYPELSQTSLDICKIQFNRDVGKAVLESYSRVLEGLAYNVVSWIDDVLYVDRTVRNRDD</sequence>
<evidence type="ECO:0000250" key="1"/>
<evidence type="ECO:0000255" key="2">
    <source>
        <dbReference type="PROSITE-ProRule" id="PRU00663"/>
    </source>
</evidence>
<evidence type="ECO:0000256" key="3">
    <source>
        <dbReference type="SAM" id="MobiDB-lite"/>
    </source>
</evidence>
<evidence type="ECO:0000269" key="4">
    <source>
    </source>
</evidence>
<evidence type="ECO:0000269" key="5">
    <source>
    </source>
</evidence>
<evidence type="ECO:0000305" key="6"/>
<evidence type="ECO:0000305" key="7">
    <source>
    </source>
</evidence>
<gene>
    <name type="primary">ROPGEF4</name>
    <name type="ordered locus">At2g45890</name>
    <name type="ORF">F4I18.13</name>
</gene>
<dbReference type="EMBL" id="AC004665">
    <property type="protein sequence ID" value="AAC28535.1"/>
    <property type="status" value="ALT_SEQ"/>
    <property type="molecule type" value="Genomic_DNA"/>
</dbReference>
<dbReference type="EMBL" id="CP002685">
    <property type="protein sequence ID" value="AEC10614.1"/>
    <property type="molecule type" value="Genomic_DNA"/>
</dbReference>
<dbReference type="EMBL" id="AK229390">
    <property type="protein sequence ID" value="BAF01252.1"/>
    <property type="molecule type" value="mRNA"/>
</dbReference>
<dbReference type="PIR" id="T02458">
    <property type="entry name" value="T02458"/>
</dbReference>
<dbReference type="RefSeq" id="NP_182113.2">
    <property type="nucleotide sequence ID" value="NM_130152.3"/>
</dbReference>
<dbReference type="SMR" id="Q0WNP7"/>
<dbReference type="BioGRID" id="4533">
    <property type="interactions" value="4"/>
</dbReference>
<dbReference type="DIP" id="DIP-59395N"/>
<dbReference type="FunCoup" id="Q0WNP7">
    <property type="interactions" value="7"/>
</dbReference>
<dbReference type="IntAct" id="Q0WNP7">
    <property type="interactions" value="5"/>
</dbReference>
<dbReference type="MINT" id="Q0WNP7"/>
<dbReference type="STRING" id="3702.Q0WNP7"/>
<dbReference type="GlyGen" id="Q0WNP7">
    <property type="glycosylation" value="1 site"/>
</dbReference>
<dbReference type="iPTMnet" id="Q0WNP7"/>
<dbReference type="PaxDb" id="3702-AT2G45890.1"/>
<dbReference type="ProteomicsDB" id="227969"/>
<dbReference type="EnsemblPlants" id="AT2G45890.1">
    <property type="protein sequence ID" value="AT2G45890.1"/>
    <property type="gene ID" value="AT2G45890"/>
</dbReference>
<dbReference type="GeneID" id="819197"/>
<dbReference type="Gramene" id="AT2G45890.1">
    <property type="protein sequence ID" value="AT2G45890.1"/>
    <property type="gene ID" value="AT2G45890"/>
</dbReference>
<dbReference type="KEGG" id="ath:AT2G45890"/>
<dbReference type="Araport" id="AT2G45890"/>
<dbReference type="TAIR" id="AT2G45890">
    <property type="gene designation" value="ROPGEF4"/>
</dbReference>
<dbReference type="eggNOG" id="ENOG502QV6R">
    <property type="taxonomic scope" value="Eukaryota"/>
</dbReference>
<dbReference type="HOGENOM" id="CLU_019073_4_1_1"/>
<dbReference type="InParanoid" id="Q0WNP7"/>
<dbReference type="OMA" id="PKDNVDG"/>
<dbReference type="OrthoDB" id="1053009at2759"/>
<dbReference type="PhylomeDB" id="Q0WNP7"/>
<dbReference type="PRO" id="PR:Q0WNP7"/>
<dbReference type="Proteomes" id="UP000006548">
    <property type="component" value="Chromosome 2"/>
</dbReference>
<dbReference type="ExpressionAtlas" id="Q0WNP7">
    <property type="expression patterns" value="baseline and differential"/>
</dbReference>
<dbReference type="GO" id="GO:0016324">
    <property type="term" value="C:apical plasma membrane"/>
    <property type="evidence" value="ECO:0000314"/>
    <property type="project" value="TAIR"/>
</dbReference>
<dbReference type="GO" id="GO:0005737">
    <property type="term" value="C:cytoplasm"/>
    <property type="evidence" value="ECO:0007669"/>
    <property type="project" value="UniProtKB-SubCell"/>
</dbReference>
<dbReference type="GO" id="GO:0005886">
    <property type="term" value="C:plasma membrane"/>
    <property type="evidence" value="ECO:0000314"/>
    <property type="project" value="TAIR"/>
</dbReference>
<dbReference type="GO" id="GO:0009531">
    <property type="term" value="C:secondary cell wall"/>
    <property type="evidence" value="ECO:0000314"/>
    <property type="project" value="TAIR"/>
</dbReference>
<dbReference type="GO" id="GO:0005085">
    <property type="term" value="F:guanyl-nucleotide exchange factor activity"/>
    <property type="evidence" value="ECO:0000250"/>
    <property type="project" value="TAIR"/>
</dbReference>
<dbReference type="GO" id="GO:0050832">
    <property type="term" value="P:defense response to fungus"/>
    <property type="evidence" value="ECO:0000315"/>
    <property type="project" value="TAIR"/>
</dbReference>
<dbReference type="GO" id="GO:0009664">
    <property type="term" value="P:plant-type cell wall organization"/>
    <property type="evidence" value="ECO:0000315"/>
    <property type="project" value="TAIR"/>
</dbReference>
<dbReference type="GO" id="GO:0048767">
    <property type="term" value="P:root hair elongation"/>
    <property type="evidence" value="ECO:0000315"/>
    <property type="project" value="TAIR"/>
</dbReference>
<dbReference type="FunFam" id="1.20.58.2010:FF:000001">
    <property type="entry name" value="Rop guanine nucleotide exchange factor 14"/>
    <property type="match status" value="1"/>
</dbReference>
<dbReference type="FunFam" id="1.20.58.2010:FF:000003">
    <property type="entry name" value="Rop guanine nucleotide exchange factor 14"/>
    <property type="match status" value="1"/>
</dbReference>
<dbReference type="FunFam" id="1.20.58.1310:FF:000002">
    <property type="entry name" value="Rop guanine nucleotide exchange factor 2"/>
    <property type="match status" value="1"/>
</dbReference>
<dbReference type="Gene3D" id="1.20.58.2010">
    <property type="entry name" value="PRONE domain, subdomain 1"/>
    <property type="match status" value="2"/>
</dbReference>
<dbReference type="InterPro" id="IPR005512">
    <property type="entry name" value="PRONE_dom"/>
</dbReference>
<dbReference type="InterPro" id="IPR038937">
    <property type="entry name" value="RopGEF"/>
</dbReference>
<dbReference type="PANTHER" id="PTHR33101">
    <property type="entry name" value="ROP GUANINE NUCLEOTIDE EXCHANGE FACTOR 1"/>
    <property type="match status" value="1"/>
</dbReference>
<dbReference type="PANTHER" id="PTHR33101:SF35">
    <property type="entry name" value="ROP GUANINE NUCLEOTIDE EXCHANGE FACTOR 4"/>
    <property type="match status" value="1"/>
</dbReference>
<dbReference type="Pfam" id="PF03759">
    <property type="entry name" value="PRONE"/>
    <property type="match status" value="1"/>
</dbReference>
<dbReference type="PROSITE" id="PS51334">
    <property type="entry name" value="PRONE"/>
    <property type="match status" value="1"/>
</dbReference>
<comment type="function">
    <text evidence="4 5">Guanine-nucleotide exchange factor (GEF) that acts as an activator of Rop (Rho of plants) GTPases by promoting the exchange of GDP for GTP. In association with ROPGEF1, acts as a specific regulator of ARAC10/ROP11 function in ABA-mediated stomatal closure.</text>
</comment>
<comment type="subunit">
    <text evidence="4">Interacts with ARAC10/ROP11.</text>
</comment>
<comment type="interaction">
    <interactant intactId="EBI-7819454">
        <id>Q0WNP7</id>
    </interactant>
    <interactant intactId="EBI-1548072">
        <id>O82481</id>
        <label>ARAC10</label>
    </interactant>
    <organismsDiffer>false</organismsDiffer>
    <experiments>5</experiments>
</comment>
<comment type="subcellular location">
    <subcellularLocation>
        <location>Cytoplasm</location>
    </subcellularLocation>
    <subcellularLocation>
        <location>Cell membrane</location>
    </subcellularLocation>
    <text>Interacts with ARAC10/ROP11 on plasma membrane in guard cells.</text>
</comment>
<comment type="tissue specificity">
    <text evidence="4 5">Expressed in root vascular tissue and trichoblast cell files. Expressed in root metaxylem cell files. Expressed in guard cells of cotyledons, rosette leaves, sepals, petal, stigmas and siliques. Expressed in root metaxylem cell files.</text>
</comment>
<comment type="domain">
    <text evidence="1">The PRONE (plant-specific Rop nucleotide exchanger) domain is responsible for the GEF activity.</text>
</comment>
<comment type="disruption phenotype">
    <text evidence="4 5">No visible phenotype under normal growth conditions, but mutant plant roots have reduced density of secondary wall pits in metaxylem vessels.</text>
</comment>
<comment type="miscellaneous">
    <text evidence="7">Plants overexpressing ROPGEF1 or ROPGEF4 are relatively insensitive to ABA-induced stomatal closure and become severely wilted during drought stress. A similar phenotype is observed in plants expressing a constitutively active ARAC10/ROP11 (PubMed:22500990).</text>
</comment>
<comment type="sequence caution" evidence="6">
    <conflict type="erroneous gene model prediction">
        <sequence resource="EMBL-CDS" id="AAC28535"/>
    </conflict>
</comment>
<organism>
    <name type="scientific">Arabidopsis thaliana</name>
    <name type="common">Mouse-ear cress</name>
    <dbReference type="NCBI Taxonomy" id="3702"/>
    <lineage>
        <taxon>Eukaryota</taxon>
        <taxon>Viridiplantae</taxon>
        <taxon>Streptophyta</taxon>
        <taxon>Embryophyta</taxon>
        <taxon>Tracheophyta</taxon>
        <taxon>Spermatophyta</taxon>
        <taxon>Magnoliopsida</taxon>
        <taxon>eudicotyledons</taxon>
        <taxon>Gunneridae</taxon>
        <taxon>Pentapetalae</taxon>
        <taxon>rosids</taxon>
        <taxon>malvids</taxon>
        <taxon>Brassicales</taxon>
        <taxon>Brassicaceae</taxon>
        <taxon>Camelineae</taxon>
        <taxon>Arabidopsis</taxon>
    </lineage>
</organism>
<name>ROGF4_ARATH</name>
<reference key="1">
    <citation type="journal article" date="1999" name="Nature">
        <title>Sequence and analysis of chromosome 2 of the plant Arabidopsis thaliana.</title>
        <authorList>
            <person name="Lin X."/>
            <person name="Kaul S."/>
            <person name="Rounsley S.D."/>
            <person name="Shea T.P."/>
            <person name="Benito M.-I."/>
            <person name="Town C.D."/>
            <person name="Fujii C.Y."/>
            <person name="Mason T.M."/>
            <person name="Bowman C.L."/>
            <person name="Barnstead M.E."/>
            <person name="Feldblyum T.V."/>
            <person name="Buell C.R."/>
            <person name="Ketchum K.A."/>
            <person name="Lee J.J."/>
            <person name="Ronning C.M."/>
            <person name="Koo H.L."/>
            <person name="Moffat K.S."/>
            <person name="Cronin L.A."/>
            <person name="Shen M."/>
            <person name="Pai G."/>
            <person name="Van Aken S."/>
            <person name="Umayam L."/>
            <person name="Tallon L.J."/>
            <person name="Gill J.E."/>
            <person name="Adams M.D."/>
            <person name="Carrera A.J."/>
            <person name="Creasy T.H."/>
            <person name="Goodman H.M."/>
            <person name="Somerville C.R."/>
            <person name="Copenhaver G.P."/>
            <person name="Preuss D."/>
            <person name="Nierman W.C."/>
            <person name="White O."/>
            <person name="Eisen J.A."/>
            <person name="Salzberg S.L."/>
            <person name="Fraser C.M."/>
            <person name="Venter J.C."/>
        </authorList>
    </citation>
    <scope>NUCLEOTIDE SEQUENCE [LARGE SCALE GENOMIC DNA]</scope>
    <source>
        <strain>cv. Columbia</strain>
    </source>
</reference>
<reference key="2">
    <citation type="journal article" date="2017" name="Plant J.">
        <title>Araport11: a complete reannotation of the Arabidopsis thaliana reference genome.</title>
        <authorList>
            <person name="Cheng C.Y."/>
            <person name="Krishnakumar V."/>
            <person name="Chan A.P."/>
            <person name="Thibaud-Nissen F."/>
            <person name="Schobel S."/>
            <person name="Town C.D."/>
        </authorList>
    </citation>
    <scope>GENOME REANNOTATION</scope>
    <source>
        <strain>cv. Columbia</strain>
    </source>
</reference>
<reference key="3">
    <citation type="submission" date="2006-07" db="EMBL/GenBank/DDBJ databases">
        <title>Large-scale analysis of RIKEN Arabidopsis full-length (RAFL) cDNAs.</title>
        <authorList>
            <person name="Totoki Y."/>
            <person name="Seki M."/>
            <person name="Ishida J."/>
            <person name="Nakajima M."/>
            <person name="Enju A."/>
            <person name="Kamiya A."/>
            <person name="Narusaka M."/>
            <person name="Shin-i T."/>
            <person name="Nakagawa M."/>
            <person name="Sakamoto N."/>
            <person name="Oishi K."/>
            <person name="Kohara Y."/>
            <person name="Kobayashi M."/>
            <person name="Toyoda A."/>
            <person name="Sakaki Y."/>
            <person name="Sakurai T."/>
            <person name="Iida K."/>
            <person name="Akiyama K."/>
            <person name="Satou M."/>
            <person name="Toyoda T."/>
            <person name="Konagaya A."/>
            <person name="Carninci P."/>
            <person name="Kawai J."/>
            <person name="Hayashizaki Y."/>
            <person name="Shinozaki K."/>
        </authorList>
    </citation>
    <scope>NUCLEOTIDE SEQUENCE [LARGE SCALE MRNA]</scope>
    <source>
        <strain>cv. Columbia</strain>
    </source>
</reference>
<reference key="4">
    <citation type="journal article" date="2005" name="Nature">
        <title>A new family of RhoGEFs activates the Rop molecular switch in plants.</title>
        <authorList>
            <person name="Berken A."/>
            <person name="Thomas C."/>
            <person name="Wittinghofer A."/>
        </authorList>
    </citation>
    <scope>GENE FAMILY</scope>
</reference>
<reference key="5">
    <citation type="journal article" date="2012" name="FEBS Lett.">
        <title>ROPGEF1 and ROPGEF4 are functional regulators of ROP11 GTPase in ABA-mediated stomatal closure in Arabidopsis.</title>
        <authorList>
            <person name="Li Z."/>
            <person name="Liu D."/>
        </authorList>
    </citation>
    <scope>FUNCTION</scope>
    <scope>INTERACTION WITH ARAC10/ROP11</scope>
    <scope>SUBCELLULAR LOCATION</scope>
    <scope>TISSUE SPECIFICITY</scope>
    <scope>DISRUPTION PHENOTYPE</scope>
</reference>
<reference key="6">
    <citation type="journal article" date="2012" name="Science">
        <title>Initiation of cell wall pattern by a Rho- and microtubule-driven symmetry breaking.</title>
        <authorList>
            <person name="Oda Y."/>
            <person name="Fukuda H."/>
        </authorList>
    </citation>
    <scope>FUNCTION</scope>
    <scope>SUBCELLULAR LOCATION</scope>
    <scope>TISSUE SPECIFICITY</scope>
    <scope>DISRUPTION PHENOTYPE</scope>
</reference>
<proteinExistence type="evidence at protein level"/>